<keyword id="KW-0021">Allosteric enzyme</keyword>
<keyword id="KW-0963">Cytoplasm</keyword>
<keyword id="KW-0378">Hydrolase</keyword>
<keyword id="KW-0479">Metal-binding</keyword>
<keyword id="KW-0645">Protease</keyword>
<keyword id="KW-0915">Sodium</keyword>
<keyword id="KW-0888">Threonine protease</keyword>
<gene>
    <name evidence="1" type="primary">hslV</name>
    <name type="ordered locus">LMOf2365_1296</name>
</gene>
<comment type="function">
    <text evidence="1">Protease subunit of a proteasome-like degradation complex believed to be a general protein degrading machinery.</text>
</comment>
<comment type="catalytic activity">
    <reaction evidence="1">
        <text>ATP-dependent cleavage of peptide bonds with broad specificity.</text>
        <dbReference type="EC" id="3.4.25.2"/>
    </reaction>
</comment>
<comment type="activity regulation">
    <text evidence="1">Allosterically activated by HslU binding.</text>
</comment>
<comment type="subunit">
    <text evidence="1">A double ring-shaped homohexamer of HslV is capped on each side by a ring-shaped HslU homohexamer. The assembly of the HslU/HslV complex is dependent on binding of ATP.</text>
</comment>
<comment type="subcellular location">
    <subcellularLocation>
        <location evidence="1">Cytoplasm</location>
    </subcellularLocation>
</comment>
<comment type="similarity">
    <text evidence="1">Belongs to the peptidase T1B family. HslV subfamily.</text>
</comment>
<accession>Q720E3</accession>
<sequence>MELHATTIFAVQHDGKAAMAGDGQVTLGESVVMKHTAKKVRRLFHDKVIAGFAGSVADAFTLFEKFEAKLNEYNGNLERASVELAQQWRSDSVLRKLEAMLIVMDKDTLLLVSGTGEVIEPDDGILAIGSGGNYALAAGRALKRHNGGQMEAKDIARHALEIASEICVFTNDHITVEEL</sequence>
<reference key="1">
    <citation type="journal article" date="2004" name="Nucleic Acids Res.">
        <title>Whole genome comparisons of serotype 4b and 1/2a strains of the food-borne pathogen Listeria monocytogenes reveal new insights into the core genome components of this species.</title>
        <authorList>
            <person name="Nelson K.E."/>
            <person name="Fouts D.E."/>
            <person name="Mongodin E.F."/>
            <person name="Ravel J."/>
            <person name="DeBoy R.T."/>
            <person name="Kolonay J.F."/>
            <person name="Rasko D.A."/>
            <person name="Angiuoli S.V."/>
            <person name="Gill S.R."/>
            <person name="Paulsen I.T."/>
            <person name="Peterson J.D."/>
            <person name="White O."/>
            <person name="Nelson W.C."/>
            <person name="Nierman W.C."/>
            <person name="Beanan M.J."/>
            <person name="Brinkac L.M."/>
            <person name="Daugherty S.C."/>
            <person name="Dodson R.J."/>
            <person name="Durkin A.S."/>
            <person name="Madupu R."/>
            <person name="Haft D.H."/>
            <person name="Selengut J."/>
            <person name="Van Aken S.E."/>
            <person name="Khouri H.M."/>
            <person name="Fedorova N."/>
            <person name="Forberger H.A."/>
            <person name="Tran B."/>
            <person name="Kathariou S."/>
            <person name="Wonderling L.D."/>
            <person name="Uhlich G.A."/>
            <person name="Bayles D.O."/>
            <person name="Luchansky J.B."/>
            <person name="Fraser C.M."/>
        </authorList>
    </citation>
    <scope>NUCLEOTIDE SEQUENCE [LARGE SCALE GENOMIC DNA]</scope>
    <source>
        <strain>F2365</strain>
    </source>
</reference>
<feature type="chain" id="PRO_0000148121" description="ATP-dependent protease subunit HslV">
    <location>
        <begin position="1"/>
        <end position="179"/>
    </location>
</feature>
<feature type="active site" evidence="1">
    <location>
        <position position="6"/>
    </location>
</feature>
<feature type="binding site" evidence="1">
    <location>
        <position position="164"/>
    </location>
    <ligand>
        <name>Na(+)</name>
        <dbReference type="ChEBI" id="CHEBI:29101"/>
    </ligand>
</feature>
<feature type="binding site" evidence="1">
    <location>
        <position position="167"/>
    </location>
    <ligand>
        <name>Na(+)</name>
        <dbReference type="ChEBI" id="CHEBI:29101"/>
    </ligand>
</feature>
<feature type="binding site" evidence="1">
    <location>
        <position position="170"/>
    </location>
    <ligand>
        <name>Na(+)</name>
        <dbReference type="ChEBI" id="CHEBI:29101"/>
    </ligand>
</feature>
<protein>
    <recommendedName>
        <fullName evidence="1">ATP-dependent protease subunit HslV</fullName>
        <ecNumber evidence="1">3.4.25.2</ecNumber>
    </recommendedName>
</protein>
<dbReference type="EC" id="3.4.25.2" evidence="1"/>
<dbReference type="EMBL" id="AE017262">
    <property type="protein sequence ID" value="AAT04071.1"/>
    <property type="molecule type" value="Genomic_DNA"/>
</dbReference>
<dbReference type="RefSeq" id="WP_003724001.1">
    <property type="nucleotide sequence ID" value="NC_002973.6"/>
</dbReference>
<dbReference type="SMR" id="Q720E3"/>
<dbReference type="MEROPS" id="T01.007"/>
<dbReference type="GeneID" id="93239152"/>
<dbReference type="KEGG" id="lmf:LMOf2365_1296"/>
<dbReference type="HOGENOM" id="CLU_093872_1_1_9"/>
<dbReference type="GO" id="GO:0009376">
    <property type="term" value="C:HslUV protease complex"/>
    <property type="evidence" value="ECO:0007669"/>
    <property type="project" value="UniProtKB-UniRule"/>
</dbReference>
<dbReference type="GO" id="GO:0005839">
    <property type="term" value="C:proteasome core complex"/>
    <property type="evidence" value="ECO:0007669"/>
    <property type="project" value="InterPro"/>
</dbReference>
<dbReference type="GO" id="GO:0046872">
    <property type="term" value="F:metal ion binding"/>
    <property type="evidence" value="ECO:0007669"/>
    <property type="project" value="UniProtKB-KW"/>
</dbReference>
<dbReference type="GO" id="GO:0004298">
    <property type="term" value="F:threonine-type endopeptidase activity"/>
    <property type="evidence" value="ECO:0007669"/>
    <property type="project" value="UniProtKB-KW"/>
</dbReference>
<dbReference type="GO" id="GO:0051603">
    <property type="term" value="P:proteolysis involved in protein catabolic process"/>
    <property type="evidence" value="ECO:0007669"/>
    <property type="project" value="InterPro"/>
</dbReference>
<dbReference type="CDD" id="cd01913">
    <property type="entry name" value="protease_HslV"/>
    <property type="match status" value="1"/>
</dbReference>
<dbReference type="FunFam" id="3.60.20.10:FF:000002">
    <property type="entry name" value="ATP-dependent protease subunit HslV"/>
    <property type="match status" value="1"/>
</dbReference>
<dbReference type="Gene3D" id="3.60.20.10">
    <property type="entry name" value="Glutamine Phosphoribosylpyrophosphate, subunit 1, domain 1"/>
    <property type="match status" value="1"/>
</dbReference>
<dbReference type="HAMAP" id="MF_00248">
    <property type="entry name" value="HslV"/>
    <property type="match status" value="1"/>
</dbReference>
<dbReference type="InterPro" id="IPR022281">
    <property type="entry name" value="ATP-dep_Prtase_HsIV_su"/>
</dbReference>
<dbReference type="InterPro" id="IPR029055">
    <property type="entry name" value="Ntn_hydrolases_N"/>
</dbReference>
<dbReference type="InterPro" id="IPR001353">
    <property type="entry name" value="Proteasome_sua/b"/>
</dbReference>
<dbReference type="InterPro" id="IPR023333">
    <property type="entry name" value="Proteasome_suB-type"/>
</dbReference>
<dbReference type="NCBIfam" id="TIGR03692">
    <property type="entry name" value="ATP_dep_HslV"/>
    <property type="match status" value="1"/>
</dbReference>
<dbReference type="NCBIfam" id="NF003964">
    <property type="entry name" value="PRK05456.1"/>
    <property type="match status" value="1"/>
</dbReference>
<dbReference type="PANTHER" id="PTHR32194:SF0">
    <property type="entry name" value="ATP-DEPENDENT PROTEASE SUBUNIT HSLV"/>
    <property type="match status" value="1"/>
</dbReference>
<dbReference type="PANTHER" id="PTHR32194">
    <property type="entry name" value="METALLOPROTEASE TLDD"/>
    <property type="match status" value="1"/>
</dbReference>
<dbReference type="Pfam" id="PF00227">
    <property type="entry name" value="Proteasome"/>
    <property type="match status" value="1"/>
</dbReference>
<dbReference type="PIRSF" id="PIRSF039093">
    <property type="entry name" value="HslV"/>
    <property type="match status" value="1"/>
</dbReference>
<dbReference type="SUPFAM" id="SSF56235">
    <property type="entry name" value="N-terminal nucleophile aminohydrolases (Ntn hydrolases)"/>
    <property type="match status" value="1"/>
</dbReference>
<dbReference type="PROSITE" id="PS51476">
    <property type="entry name" value="PROTEASOME_BETA_2"/>
    <property type="match status" value="1"/>
</dbReference>
<proteinExistence type="inferred from homology"/>
<name>HSLV_LISMF</name>
<organism>
    <name type="scientific">Listeria monocytogenes serotype 4b (strain F2365)</name>
    <dbReference type="NCBI Taxonomy" id="265669"/>
    <lineage>
        <taxon>Bacteria</taxon>
        <taxon>Bacillati</taxon>
        <taxon>Bacillota</taxon>
        <taxon>Bacilli</taxon>
        <taxon>Bacillales</taxon>
        <taxon>Listeriaceae</taxon>
        <taxon>Listeria</taxon>
    </lineage>
</organism>
<evidence type="ECO:0000255" key="1">
    <source>
        <dbReference type="HAMAP-Rule" id="MF_00248"/>
    </source>
</evidence>